<gene>
    <name type="primary">HOX16</name>
    <name type="ordered locus">Os02g0729700</name>
    <name type="ordered locus">LOC_Os02g49700</name>
    <name type="ORF">OsJ_007974</name>
    <name type="ORF">OSJNBa0072H09.24</name>
    <name type="ORF">P0617A09.3</name>
</gene>
<feature type="chain" id="PRO_0000331705" description="Homeobox-leucine zipper protein HOX16">
    <location>
        <begin position="1"/>
        <end position="343"/>
    </location>
</feature>
<feature type="DNA-binding region" description="Homeobox" evidence="2">
    <location>
        <begin position="74"/>
        <end position="133"/>
    </location>
</feature>
<feature type="region of interest" description="Leucine-zipper">
    <location>
        <begin position="132"/>
        <end position="176"/>
    </location>
</feature>
<feature type="region of interest" description="Disordered" evidence="3">
    <location>
        <begin position="218"/>
        <end position="239"/>
    </location>
</feature>
<comment type="function">
    <text evidence="1">Probable transcription factor.</text>
</comment>
<comment type="subcellular location">
    <subcellularLocation>
        <location evidence="5">Nucleus</location>
    </subcellularLocation>
</comment>
<comment type="tissue specificity">
    <text evidence="4">Expressed in seedlings, stems, leaf sheaths and blades and panicles.</text>
</comment>
<comment type="similarity">
    <text evidence="5">Belongs to the HD-ZIP homeobox family. Class I subfamily.</text>
</comment>
<comment type="sequence caution" evidence="5">
    <conflict type="erroneous initiation">
        <sequence resource="EMBL-CDS" id="AAS68137"/>
    </conflict>
    <text>Truncated N-terminus.</text>
</comment>
<comment type="sequence caution" evidence="5">
    <conflict type="frameshift">
        <sequence resource="EMBL-CDS" id="AAS68137"/>
    </conflict>
</comment>
<comment type="sequence caution" evidence="5">
    <conflict type="frameshift">
        <sequence resource="EMBL-CDS" id="AAS83417"/>
    </conflict>
</comment>
<comment type="sequence caution" evidence="5">
    <conflict type="miscellaneous discrepancy">
        <sequence resource="EMBL-CDS" id="AAS83417"/>
    </conflict>
    <text>Intron retention.</text>
</comment>
<evidence type="ECO:0000250" key="1"/>
<evidence type="ECO:0000255" key="2">
    <source>
        <dbReference type="PROSITE-ProRule" id="PRU00108"/>
    </source>
</evidence>
<evidence type="ECO:0000256" key="3">
    <source>
        <dbReference type="SAM" id="MobiDB-lite"/>
    </source>
</evidence>
<evidence type="ECO:0000269" key="4">
    <source>
    </source>
</evidence>
<evidence type="ECO:0000305" key="5"/>
<protein>
    <recommendedName>
        <fullName>Homeobox-leucine zipper protein HOX16</fullName>
    </recommendedName>
    <alternativeName>
        <fullName>HD-ZIP protein HOX16</fullName>
    </alternativeName>
    <alternativeName>
        <fullName>Homeodomain transcription factor HOX16</fullName>
    </alternativeName>
    <alternativeName>
        <fullName>OsHox16</fullName>
    </alternativeName>
</protein>
<dbReference type="EMBL" id="AY554029">
    <property type="protein sequence ID" value="AAS83417.1"/>
    <property type="status" value="ALT_SEQ"/>
    <property type="molecule type" value="mRNA"/>
</dbReference>
<dbReference type="EMBL" id="AY559045">
    <property type="protein sequence ID" value="AAS68137.1"/>
    <property type="status" value="ALT_SEQ"/>
    <property type="molecule type" value="mRNA"/>
</dbReference>
<dbReference type="EMBL" id="AP004888">
    <property type="protein sequence ID" value="BAD15915.1"/>
    <property type="molecule type" value="Genomic_DNA"/>
</dbReference>
<dbReference type="EMBL" id="AP005751">
    <property type="protein sequence ID" value="BAD16354.1"/>
    <property type="molecule type" value="Genomic_DNA"/>
</dbReference>
<dbReference type="EMBL" id="AP008208">
    <property type="protein sequence ID" value="BAF09922.1"/>
    <property type="molecule type" value="Genomic_DNA"/>
</dbReference>
<dbReference type="EMBL" id="AP014958">
    <property type="protein sequence ID" value="BAS80732.1"/>
    <property type="molecule type" value="Genomic_DNA"/>
</dbReference>
<dbReference type="EMBL" id="CM000139">
    <property type="protein sequence ID" value="EAZ24491.1"/>
    <property type="molecule type" value="Genomic_DNA"/>
</dbReference>
<dbReference type="EMBL" id="AK119592">
    <property type="protein sequence ID" value="BAG99707.1"/>
    <property type="molecule type" value="mRNA"/>
</dbReference>
<dbReference type="RefSeq" id="XP_015626253.1">
    <property type="nucleotide sequence ID" value="XM_015770767.1"/>
</dbReference>
<dbReference type="SMR" id="Q6YWR4"/>
<dbReference type="FunCoup" id="Q6YWR4">
    <property type="interactions" value="121"/>
</dbReference>
<dbReference type="PaxDb" id="39947-Q6YWR4"/>
<dbReference type="EnsemblPlants" id="Os02t0729700-01">
    <property type="protein sequence ID" value="Os02t0729700-01"/>
    <property type="gene ID" value="Os02g0729700"/>
</dbReference>
<dbReference type="EnsemblPlants" id="Os02t0729700-02">
    <property type="protein sequence ID" value="Os02t0729700-02"/>
    <property type="gene ID" value="Os02g0729700"/>
</dbReference>
<dbReference type="Gramene" id="Os02t0729700-01">
    <property type="protein sequence ID" value="Os02t0729700-01"/>
    <property type="gene ID" value="Os02g0729700"/>
</dbReference>
<dbReference type="Gramene" id="Os02t0729700-02">
    <property type="protein sequence ID" value="Os02t0729700-02"/>
    <property type="gene ID" value="Os02g0729700"/>
</dbReference>
<dbReference type="KEGG" id="dosa:Os02g0729700"/>
<dbReference type="eggNOG" id="KOG0483">
    <property type="taxonomic scope" value="Eukaryota"/>
</dbReference>
<dbReference type="HOGENOM" id="CLU_060842_2_0_1"/>
<dbReference type="InParanoid" id="Q6YWR4"/>
<dbReference type="OMA" id="FDASCHG"/>
<dbReference type="OrthoDB" id="6159439at2759"/>
<dbReference type="Proteomes" id="UP000000763">
    <property type="component" value="Chromosome 2"/>
</dbReference>
<dbReference type="Proteomes" id="UP000007752">
    <property type="component" value="Chromosome 2"/>
</dbReference>
<dbReference type="Proteomes" id="UP000059680">
    <property type="component" value="Chromosome 2"/>
</dbReference>
<dbReference type="GO" id="GO:0005634">
    <property type="term" value="C:nucleus"/>
    <property type="evidence" value="ECO:0000318"/>
    <property type="project" value="GO_Central"/>
</dbReference>
<dbReference type="GO" id="GO:0000981">
    <property type="term" value="F:DNA-binding transcription factor activity, RNA polymerase II-specific"/>
    <property type="evidence" value="ECO:0007669"/>
    <property type="project" value="InterPro"/>
</dbReference>
<dbReference type="GO" id="GO:0043565">
    <property type="term" value="F:sequence-specific DNA binding"/>
    <property type="evidence" value="ECO:0000318"/>
    <property type="project" value="GO_Central"/>
</dbReference>
<dbReference type="GO" id="GO:0045893">
    <property type="term" value="P:positive regulation of DNA-templated transcription"/>
    <property type="evidence" value="ECO:0000318"/>
    <property type="project" value="GO_Central"/>
</dbReference>
<dbReference type="CDD" id="cd00086">
    <property type="entry name" value="homeodomain"/>
    <property type="match status" value="1"/>
</dbReference>
<dbReference type="FunFam" id="1.10.10.60:FF:000159">
    <property type="entry name" value="Homeobox-leucine zipper protein HAT5"/>
    <property type="match status" value="1"/>
</dbReference>
<dbReference type="Gene3D" id="1.10.10.60">
    <property type="entry name" value="Homeodomain-like"/>
    <property type="match status" value="1"/>
</dbReference>
<dbReference type="InterPro" id="IPR001356">
    <property type="entry name" value="HD"/>
</dbReference>
<dbReference type="InterPro" id="IPR045224">
    <property type="entry name" value="HDZip_class_I_plant"/>
</dbReference>
<dbReference type="InterPro" id="IPR017970">
    <property type="entry name" value="Homeobox_CS"/>
</dbReference>
<dbReference type="InterPro" id="IPR009057">
    <property type="entry name" value="Homeodomain-like_sf"/>
</dbReference>
<dbReference type="InterPro" id="IPR000047">
    <property type="entry name" value="HTH_motif"/>
</dbReference>
<dbReference type="InterPro" id="IPR003106">
    <property type="entry name" value="Leu_zip_homeo"/>
</dbReference>
<dbReference type="PANTHER" id="PTHR24326">
    <property type="entry name" value="HOMEOBOX-LEUCINE ZIPPER PROTEIN"/>
    <property type="match status" value="1"/>
</dbReference>
<dbReference type="PANTHER" id="PTHR24326:SF497">
    <property type="entry name" value="HOMEOBOX-LEUCINE ZIPPER PROTEIN HAT5"/>
    <property type="match status" value="1"/>
</dbReference>
<dbReference type="Pfam" id="PF02183">
    <property type="entry name" value="HALZ"/>
    <property type="match status" value="1"/>
</dbReference>
<dbReference type="Pfam" id="PF00046">
    <property type="entry name" value="Homeodomain"/>
    <property type="match status" value="1"/>
</dbReference>
<dbReference type="PRINTS" id="PR00031">
    <property type="entry name" value="HTHREPRESSR"/>
</dbReference>
<dbReference type="SMART" id="SM00389">
    <property type="entry name" value="HOX"/>
    <property type="match status" value="1"/>
</dbReference>
<dbReference type="SUPFAM" id="SSF46689">
    <property type="entry name" value="Homeodomain-like"/>
    <property type="match status" value="1"/>
</dbReference>
<dbReference type="PROSITE" id="PS00027">
    <property type="entry name" value="HOMEOBOX_1"/>
    <property type="match status" value="1"/>
</dbReference>
<dbReference type="PROSITE" id="PS50071">
    <property type="entry name" value="HOMEOBOX_2"/>
    <property type="match status" value="1"/>
</dbReference>
<reference key="1">
    <citation type="journal article" date="2008" name="Plant Mol. Biol.">
        <title>A genome-wide survey of HD-Zip genes in rice and analysis of drought-responsive family members.</title>
        <authorList>
            <person name="Agalou A."/>
            <person name="Purwantomo S."/>
            <person name="Oevernaes E."/>
            <person name="Johannesson H."/>
            <person name="Zhu X."/>
            <person name="Estiati A."/>
            <person name="de Kam R.J."/>
            <person name="Engstroem P."/>
            <person name="Slamet-Loedin I.H."/>
            <person name="Zhu Z."/>
            <person name="Wang M."/>
            <person name="Xiong L."/>
            <person name="Meijer A.H."/>
            <person name="Ouwerkerk P.B.F."/>
        </authorList>
    </citation>
    <scope>NUCLEOTIDE SEQUENCE [MRNA]</scope>
    <scope>TISSUE SPECIFICITY</scope>
    <scope>GENE FAMILY</scope>
    <scope>NOMENCLATURE</scope>
    <source>
        <strain>cv. Nipponbare</strain>
    </source>
</reference>
<reference key="2">
    <citation type="journal article" date="2005" name="Nature">
        <title>The map-based sequence of the rice genome.</title>
        <authorList>
            <consortium name="International rice genome sequencing project (IRGSP)"/>
        </authorList>
    </citation>
    <scope>NUCLEOTIDE SEQUENCE [LARGE SCALE GENOMIC DNA]</scope>
    <source>
        <strain>cv. Nipponbare</strain>
    </source>
</reference>
<reference key="3">
    <citation type="journal article" date="2008" name="Nucleic Acids Res.">
        <title>The rice annotation project database (RAP-DB): 2008 update.</title>
        <authorList>
            <consortium name="The rice annotation project (RAP)"/>
        </authorList>
    </citation>
    <scope>GENOME REANNOTATION</scope>
    <source>
        <strain>cv. Nipponbare</strain>
    </source>
</reference>
<reference key="4">
    <citation type="journal article" date="2013" name="Rice">
        <title>Improvement of the Oryza sativa Nipponbare reference genome using next generation sequence and optical map data.</title>
        <authorList>
            <person name="Kawahara Y."/>
            <person name="de la Bastide M."/>
            <person name="Hamilton J.P."/>
            <person name="Kanamori H."/>
            <person name="McCombie W.R."/>
            <person name="Ouyang S."/>
            <person name="Schwartz D.C."/>
            <person name="Tanaka T."/>
            <person name="Wu J."/>
            <person name="Zhou S."/>
            <person name="Childs K.L."/>
            <person name="Davidson R.M."/>
            <person name="Lin H."/>
            <person name="Quesada-Ocampo L."/>
            <person name="Vaillancourt B."/>
            <person name="Sakai H."/>
            <person name="Lee S.S."/>
            <person name="Kim J."/>
            <person name="Numa H."/>
            <person name="Itoh T."/>
            <person name="Buell C.R."/>
            <person name="Matsumoto T."/>
        </authorList>
    </citation>
    <scope>GENOME REANNOTATION</scope>
    <source>
        <strain>cv. Nipponbare</strain>
    </source>
</reference>
<reference key="5">
    <citation type="journal article" date="2005" name="PLoS Biol.">
        <title>The genomes of Oryza sativa: a history of duplications.</title>
        <authorList>
            <person name="Yu J."/>
            <person name="Wang J."/>
            <person name="Lin W."/>
            <person name="Li S."/>
            <person name="Li H."/>
            <person name="Zhou J."/>
            <person name="Ni P."/>
            <person name="Dong W."/>
            <person name="Hu S."/>
            <person name="Zeng C."/>
            <person name="Zhang J."/>
            <person name="Zhang Y."/>
            <person name="Li R."/>
            <person name="Xu Z."/>
            <person name="Li S."/>
            <person name="Li X."/>
            <person name="Zheng H."/>
            <person name="Cong L."/>
            <person name="Lin L."/>
            <person name="Yin J."/>
            <person name="Geng J."/>
            <person name="Li G."/>
            <person name="Shi J."/>
            <person name="Liu J."/>
            <person name="Lv H."/>
            <person name="Li J."/>
            <person name="Wang J."/>
            <person name="Deng Y."/>
            <person name="Ran L."/>
            <person name="Shi X."/>
            <person name="Wang X."/>
            <person name="Wu Q."/>
            <person name="Li C."/>
            <person name="Ren X."/>
            <person name="Wang J."/>
            <person name="Wang X."/>
            <person name="Li D."/>
            <person name="Liu D."/>
            <person name="Zhang X."/>
            <person name="Ji Z."/>
            <person name="Zhao W."/>
            <person name="Sun Y."/>
            <person name="Zhang Z."/>
            <person name="Bao J."/>
            <person name="Han Y."/>
            <person name="Dong L."/>
            <person name="Ji J."/>
            <person name="Chen P."/>
            <person name="Wu S."/>
            <person name="Liu J."/>
            <person name="Xiao Y."/>
            <person name="Bu D."/>
            <person name="Tan J."/>
            <person name="Yang L."/>
            <person name="Ye C."/>
            <person name="Zhang J."/>
            <person name="Xu J."/>
            <person name="Zhou Y."/>
            <person name="Yu Y."/>
            <person name="Zhang B."/>
            <person name="Zhuang S."/>
            <person name="Wei H."/>
            <person name="Liu B."/>
            <person name="Lei M."/>
            <person name="Yu H."/>
            <person name="Li Y."/>
            <person name="Xu H."/>
            <person name="Wei S."/>
            <person name="He X."/>
            <person name="Fang L."/>
            <person name="Zhang Z."/>
            <person name="Zhang Y."/>
            <person name="Huang X."/>
            <person name="Su Z."/>
            <person name="Tong W."/>
            <person name="Li J."/>
            <person name="Tong Z."/>
            <person name="Li S."/>
            <person name="Ye J."/>
            <person name="Wang L."/>
            <person name="Fang L."/>
            <person name="Lei T."/>
            <person name="Chen C.-S."/>
            <person name="Chen H.-C."/>
            <person name="Xu Z."/>
            <person name="Li H."/>
            <person name="Huang H."/>
            <person name="Zhang F."/>
            <person name="Xu H."/>
            <person name="Li N."/>
            <person name="Zhao C."/>
            <person name="Li S."/>
            <person name="Dong L."/>
            <person name="Huang Y."/>
            <person name="Li L."/>
            <person name="Xi Y."/>
            <person name="Qi Q."/>
            <person name="Li W."/>
            <person name="Zhang B."/>
            <person name="Hu W."/>
            <person name="Zhang Y."/>
            <person name="Tian X."/>
            <person name="Jiao Y."/>
            <person name="Liang X."/>
            <person name="Jin J."/>
            <person name="Gao L."/>
            <person name="Zheng W."/>
            <person name="Hao B."/>
            <person name="Liu S.-M."/>
            <person name="Wang W."/>
            <person name="Yuan L."/>
            <person name="Cao M."/>
            <person name="McDermott J."/>
            <person name="Samudrala R."/>
            <person name="Wang J."/>
            <person name="Wong G.K.-S."/>
            <person name="Yang H."/>
        </authorList>
    </citation>
    <scope>NUCLEOTIDE SEQUENCE [LARGE SCALE GENOMIC DNA]</scope>
    <source>
        <strain>cv. Nipponbare</strain>
    </source>
</reference>
<reference key="6">
    <citation type="journal article" date="2003" name="Science">
        <title>Collection, mapping, and annotation of over 28,000 cDNA clones from japonica rice.</title>
        <authorList>
            <consortium name="The rice full-length cDNA consortium"/>
        </authorList>
    </citation>
    <scope>NUCLEOTIDE SEQUENCE [LARGE SCALE MRNA]</scope>
    <source>
        <strain>cv. Nipponbare</strain>
    </source>
</reference>
<proteinExistence type="evidence at transcript level"/>
<keyword id="KW-0238">DNA-binding</keyword>
<keyword id="KW-0371">Homeobox</keyword>
<keyword id="KW-0539">Nucleus</keyword>
<keyword id="KW-1185">Reference proteome</keyword>
<keyword id="KW-0804">Transcription</keyword>
<keyword id="KW-0805">Transcription regulation</keyword>
<name>HOX16_ORYSJ</name>
<sequence length="343" mass="37614">MESGRLIFSTAGSGAGQMLFLDCGAGGGGVGGGAMFHRGARPVLGMEEGGRGVKRPFFTTPDELLEEEYYDEQLPEKKRRLTPEQVHLLERSFEEENKLEPERKTELARKLGLQPRQVAVWFQNRRARWKTKQLERDFDRLKASFDALRADHDALLQDNHRLHSQVMSLTEKLQEKETTTEGSAGAAVDVPGLPAAADVKVAVPDAEEPALEEAAAAFEEQQEQQVKAEDRLSTGSGGSAVVDTDAQLVVGCGRQHLAAVDSSVESYFPGGDEYHDCVMGPMDHAAGGIQSEEDDGAGSDEGCSYYADDAGVLFADHGHHHHHQHADDDEEDGQQISCWWMWN</sequence>
<organism>
    <name type="scientific">Oryza sativa subsp. japonica</name>
    <name type="common">Rice</name>
    <dbReference type="NCBI Taxonomy" id="39947"/>
    <lineage>
        <taxon>Eukaryota</taxon>
        <taxon>Viridiplantae</taxon>
        <taxon>Streptophyta</taxon>
        <taxon>Embryophyta</taxon>
        <taxon>Tracheophyta</taxon>
        <taxon>Spermatophyta</taxon>
        <taxon>Magnoliopsida</taxon>
        <taxon>Liliopsida</taxon>
        <taxon>Poales</taxon>
        <taxon>Poaceae</taxon>
        <taxon>BOP clade</taxon>
        <taxon>Oryzoideae</taxon>
        <taxon>Oryzeae</taxon>
        <taxon>Oryzinae</taxon>
        <taxon>Oryza</taxon>
        <taxon>Oryza sativa</taxon>
    </lineage>
</organism>
<accession>Q6YWR4</accession>
<accession>B7F510</accession>
<accession>Q6Q502</accession>
<accession>Q6Q7E3</accession>